<reference key="1">
    <citation type="journal article" date="2007" name="Science">
        <title>Legumes symbioses: absence of nod genes in photosynthetic bradyrhizobia.</title>
        <authorList>
            <person name="Giraud E."/>
            <person name="Moulin L."/>
            <person name="Vallenet D."/>
            <person name="Barbe V."/>
            <person name="Cytryn E."/>
            <person name="Avarre J.-C."/>
            <person name="Jaubert M."/>
            <person name="Simon D."/>
            <person name="Cartieaux F."/>
            <person name="Prin Y."/>
            <person name="Bena G."/>
            <person name="Hannibal L."/>
            <person name="Fardoux J."/>
            <person name="Kojadinovic M."/>
            <person name="Vuillet L."/>
            <person name="Lajus A."/>
            <person name="Cruveiller S."/>
            <person name="Rouy Z."/>
            <person name="Mangenot S."/>
            <person name="Segurens B."/>
            <person name="Dossat C."/>
            <person name="Franck W.L."/>
            <person name="Chang W.-S."/>
            <person name="Saunders E."/>
            <person name="Bruce D."/>
            <person name="Richardson P."/>
            <person name="Normand P."/>
            <person name="Dreyfus B."/>
            <person name="Pignol D."/>
            <person name="Stacey G."/>
            <person name="Emerich D."/>
            <person name="Vermeglio A."/>
            <person name="Medigue C."/>
            <person name="Sadowsky M."/>
        </authorList>
    </citation>
    <scope>NUCLEOTIDE SEQUENCE [LARGE SCALE GENOMIC DNA]</scope>
    <source>
        <strain>BTAi1 / ATCC BAA-1182</strain>
    </source>
</reference>
<proteinExistence type="inferred from homology"/>
<comment type="function">
    <text evidence="1">One of the primary rRNA binding proteins, it binds specifically to the 5'-end of 16S ribosomal RNA.</text>
</comment>
<comment type="subunit">
    <text evidence="1">Part of the 30S ribosomal subunit.</text>
</comment>
<comment type="similarity">
    <text evidence="1">Belongs to the universal ribosomal protein uS17 family.</text>
</comment>
<organism>
    <name type="scientific">Bradyrhizobium sp. (strain BTAi1 / ATCC BAA-1182)</name>
    <dbReference type="NCBI Taxonomy" id="288000"/>
    <lineage>
        <taxon>Bacteria</taxon>
        <taxon>Pseudomonadati</taxon>
        <taxon>Pseudomonadota</taxon>
        <taxon>Alphaproteobacteria</taxon>
        <taxon>Hyphomicrobiales</taxon>
        <taxon>Nitrobacteraceae</taxon>
        <taxon>Bradyrhizobium</taxon>
    </lineage>
</organism>
<gene>
    <name evidence="1" type="primary">rpsQ</name>
    <name type="ordered locus">BBta_5061</name>
</gene>
<name>RS17_BRASB</name>
<protein>
    <recommendedName>
        <fullName evidence="1">Small ribosomal subunit protein uS17</fullName>
    </recommendedName>
    <alternativeName>
        <fullName evidence="2">30S ribosomal protein S17</fullName>
    </alternativeName>
</protein>
<dbReference type="EMBL" id="CP000494">
    <property type="protein sequence ID" value="ABQ37062.1"/>
    <property type="molecule type" value="Genomic_DNA"/>
</dbReference>
<dbReference type="RefSeq" id="WP_006611847.1">
    <property type="nucleotide sequence ID" value="NC_009485.1"/>
</dbReference>
<dbReference type="SMR" id="A5ELL8"/>
<dbReference type="STRING" id="288000.BBta_5061"/>
<dbReference type="KEGG" id="bbt:BBta_5061"/>
<dbReference type="eggNOG" id="COG0186">
    <property type="taxonomic scope" value="Bacteria"/>
</dbReference>
<dbReference type="HOGENOM" id="CLU_073626_1_1_5"/>
<dbReference type="OrthoDB" id="9811714at2"/>
<dbReference type="Proteomes" id="UP000000246">
    <property type="component" value="Chromosome"/>
</dbReference>
<dbReference type="GO" id="GO:0022627">
    <property type="term" value="C:cytosolic small ribosomal subunit"/>
    <property type="evidence" value="ECO:0007669"/>
    <property type="project" value="TreeGrafter"/>
</dbReference>
<dbReference type="GO" id="GO:0019843">
    <property type="term" value="F:rRNA binding"/>
    <property type="evidence" value="ECO:0007669"/>
    <property type="project" value="UniProtKB-UniRule"/>
</dbReference>
<dbReference type="GO" id="GO:0003735">
    <property type="term" value="F:structural constituent of ribosome"/>
    <property type="evidence" value="ECO:0007669"/>
    <property type="project" value="InterPro"/>
</dbReference>
<dbReference type="GO" id="GO:0006412">
    <property type="term" value="P:translation"/>
    <property type="evidence" value="ECO:0007669"/>
    <property type="project" value="UniProtKB-UniRule"/>
</dbReference>
<dbReference type="CDD" id="cd00364">
    <property type="entry name" value="Ribosomal_uS17"/>
    <property type="match status" value="1"/>
</dbReference>
<dbReference type="FunFam" id="2.40.50.140:FF:000204">
    <property type="entry name" value="30S ribosomal protein S17"/>
    <property type="match status" value="1"/>
</dbReference>
<dbReference type="Gene3D" id="2.40.50.140">
    <property type="entry name" value="Nucleic acid-binding proteins"/>
    <property type="match status" value="1"/>
</dbReference>
<dbReference type="HAMAP" id="MF_01345_B">
    <property type="entry name" value="Ribosomal_uS17_B"/>
    <property type="match status" value="1"/>
</dbReference>
<dbReference type="InterPro" id="IPR012340">
    <property type="entry name" value="NA-bd_OB-fold"/>
</dbReference>
<dbReference type="InterPro" id="IPR000266">
    <property type="entry name" value="Ribosomal_uS17"/>
</dbReference>
<dbReference type="InterPro" id="IPR019984">
    <property type="entry name" value="Ribosomal_uS17_bact/chlr"/>
</dbReference>
<dbReference type="InterPro" id="IPR019979">
    <property type="entry name" value="Ribosomal_uS17_CS"/>
</dbReference>
<dbReference type="NCBIfam" id="NF004123">
    <property type="entry name" value="PRK05610.1"/>
    <property type="match status" value="1"/>
</dbReference>
<dbReference type="NCBIfam" id="TIGR03635">
    <property type="entry name" value="uS17_bact"/>
    <property type="match status" value="1"/>
</dbReference>
<dbReference type="PANTHER" id="PTHR10744">
    <property type="entry name" value="40S RIBOSOMAL PROTEIN S11 FAMILY MEMBER"/>
    <property type="match status" value="1"/>
</dbReference>
<dbReference type="PANTHER" id="PTHR10744:SF1">
    <property type="entry name" value="SMALL RIBOSOMAL SUBUNIT PROTEIN US17M"/>
    <property type="match status" value="1"/>
</dbReference>
<dbReference type="Pfam" id="PF00366">
    <property type="entry name" value="Ribosomal_S17"/>
    <property type="match status" value="1"/>
</dbReference>
<dbReference type="PRINTS" id="PR00973">
    <property type="entry name" value="RIBOSOMALS17"/>
</dbReference>
<dbReference type="SUPFAM" id="SSF50249">
    <property type="entry name" value="Nucleic acid-binding proteins"/>
    <property type="match status" value="1"/>
</dbReference>
<dbReference type="PROSITE" id="PS00056">
    <property type="entry name" value="RIBOSOMAL_S17"/>
    <property type="match status" value="1"/>
</dbReference>
<sequence>MPKRTLQGVVVSDKQAKTVVVRVDRRFTHPIYKKTIRRSKNYHAHDESNEFKPGDMVWIEESKPISKLKRWTVVRGEHKKTA</sequence>
<accession>A5ELL8</accession>
<keyword id="KW-1185">Reference proteome</keyword>
<keyword id="KW-0687">Ribonucleoprotein</keyword>
<keyword id="KW-0689">Ribosomal protein</keyword>
<keyword id="KW-0694">RNA-binding</keyword>
<keyword id="KW-0699">rRNA-binding</keyword>
<evidence type="ECO:0000255" key="1">
    <source>
        <dbReference type="HAMAP-Rule" id="MF_01345"/>
    </source>
</evidence>
<evidence type="ECO:0000305" key="2"/>
<feature type="chain" id="PRO_1000054919" description="Small ribosomal subunit protein uS17">
    <location>
        <begin position="1"/>
        <end position="82"/>
    </location>
</feature>